<dbReference type="GO" id="GO:0005576">
    <property type="term" value="C:extracellular region"/>
    <property type="evidence" value="ECO:0007669"/>
    <property type="project" value="UniProtKB-SubCell"/>
</dbReference>
<feature type="chain" id="PRO_0000453941" description="Septenin 1g">
    <location>
        <begin position="1"/>
        <end position="17"/>
    </location>
</feature>
<feature type="unsure residue" description="L or I" evidence="1">
    <location>
        <position position="11"/>
    </location>
</feature>
<accession>C0HLW8</accession>
<protein>
    <recommendedName>
        <fullName evidence="2">Septenin 1g</fullName>
    </recommendedName>
</protein>
<sequence length="17" mass="1626">DDAVANGVHAISGVVDS</sequence>
<name>SEP1G_OSTSE</name>
<evidence type="ECO:0000269" key="1">
    <source>
    </source>
</evidence>
<evidence type="ECO:0000303" key="2">
    <source>
    </source>
</evidence>
<evidence type="ECO:0000305" key="3"/>
<evidence type="ECO:0000305" key="4">
    <source>
    </source>
</evidence>
<keyword id="KW-0903">Direct protein sequencing</keyword>
<keyword id="KW-0964">Secreted</keyword>
<comment type="function">
    <text evidence="2">May act as an antimicrobial peptide.</text>
</comment>
<comment type="subcellular location">
    <subcellularLocation>
        <location evidence="1">Secreted</location>
    </subcellularLocation>
</comment>
<comment type="tissue specificity">
    <text evidence="4">Expressed in skin glands.</text>
</comment>
<comment type="mass spectrometry" mass="1624.769" method="Electrospray" evidence="1"/>
<comment type="similarity">
    <text evidence="3">Belongs to the Frog skin active peptide (FSAP) family. Septenin subfamily.</text>
</comment>
<organism>
    <name type="scientific">Osteopilus septentrionalis</name>
    <name type="common">Cuban treefrog</name>
    <dbReference type="NCBI Taxonomy" id="317373"/>
    <lineage>
        <taxon>Eukaryota</taxon>
        <taxon>Metazoa</taxon>
        <taxon>Chordata</taxon>
        <taxon>Craniata</taxon>
        <taxon>Vertebrata</taxon>
        <taxon>Euteleostomi</taxon>
        <taxon>Amphibia</taxon>
        <taxon>Batrachia</taxon>
        <taxon>Anura</taxon>
        <taxon>Neobatrachia</taxon>
        <taxon>Hyloidea</taxon>
        <taxon>Hylidae</taxon>
        <taxon>Hylinae</taxon>
        <taxon>Lophiohylini</taxon>
        <taxon>Osteopilus</taxon>
    </lineage>
</organism>
<proteinExistence type="evidence at protein level"/>
<reference key="1">
    <citation type="journal article" date="2021" name="Rapid Commun. Mass Spectrom.">
        <title>Manual mass spectrometry de novo sequencing of the anionic host defense peptides of the Cuban Treefrog Osteopilus septentrionalis.</title>
        <authorList>
            <person name="Samgina T.Y."/>
            <person name="Tolpina M.D."/>
            <person name="Surin A.K."/>
            <person name="Kovalev S.V."/>
            <person name="Bosch R.A."/>
            <person name="Alonso I.P."/>
            <person name="Garcia F.A."/>
            <person name="Gonzalez Lopez L.J."/>
            <person name="Lebedev A.T."/>
        </authorList>
    </citation>
    <scope>PROTEIN SEQUENCE</scope>
    <scope>MASS SPECTROMETRY</scope>
</reference>